<sequence>MLYHLFVNNQVKLQNDFKPESVAAIRSSAFNSKGGTTVFNFLSAGENILLHISIRPGENVIVFNSRLKNGAWGPEERIPYAEKFRPPNPSITVIDHGDRFQIRFDYGTSIYYNKRIKENAAAIAYNAENSLFSSPVTVDVHGLLPPLPPA</sequence>
<gene>
    <name type="primary">Cgl2</name>
</gene>
<feature type="chain" id="PRO_0000076968" description="Galectin-2">
    <location>
        <begin position="1"/>
        <end position="150"/>
    </location>
</feature>
<feature type="domain" description="Galectin" evidence="1">
    <location>
        <begin position="9"/>
        <end position="141"/>
    </location>
</feature>
<feature type="binding site" evidence="3 4 7 8 9 10 11 12">
    <location>
        <position position="51"/>
    </location>
    <ligand>
        <name>a carbohydrate</name>
        <dbReference type="ChEBI" id="CHEBI:16646"/>
    </ligand>
</feature>
<feature type="binding site" evidence="3 4 7 8 9 10 11 12">
    <location>
        <position position="55"/>
    </location>
    <ligand>
        <name>a carbohydrate</name>
        <dbReference type="ChEBI" id="CHEBI:16646"/>
    </ligand>
</feature>
<feature type="binding site" evidence="3 4 7 8 9 10 11 12">
    <location>
        <position position="64"/>
    </location>
    <ligand>
        <name>a carbohydrate</name>
        <dbReference type="ChEBI" id="CHEBI:16646"/>
    </ligand>
</feature>
<feature type="binding site" evidence="3 4 11">
    <location>
        <position position="75"/>
    </location>
    <ligand>
        <name>a carbohydrate</name>
        <dbReference type="ChEBI" id="CHEBI:16646"/>
    </ligand>
</feature>
<feature type="binding site" evidence="4">
    <location>
        <position position="77"/>
    </location>
    <ligand>
        <name>a carbohydrate</name>
        <dbReference type="ChEBI" id="CHEBI:16646"/>
    </ligand>
</feature>
<feature type="mutagenesis site" description="Completely abolishes carbohydrate binding. Loss of toxicity towards C.elegans." evidence="3 4">
    <original>R</original>
    <variation>A</variation>
    <location>
        <position position="55"/>
    </location>
</feature>
<feature type="mutagenesis site" description="Completely abolishes carbohydrate binding." evidence="3">
    <original>W</original>
    <variation>G</variation>
    <location>
        <position position="72"/>
    </location>
</feature>
<feature type="mutagenesis site" description="Reduces the stability of the tetrameric structure." evidence="3">
    <original>P</original>
    <variation>G</variation>
    <location>
        <position position="146"/>
    </location>
</feature>
<feature type="mutagenesis site" description="Reduces the stability of the tetrameric structure." evidence="3">
    <original>L</original>
    <variation>S</variation>
    <location>
        <position position="147"/>
    </location>
</feature>
<feature type="mutagenesis site" description="Reduces the stability of the tetrameric structure." evidence="3">
    <original>P</original>
    <variation>G</variation>
    <location>
        <position position="148"/>
    </location>
</feature>
<feature type="sequence conflict" description="In Ref. 1; AAB06178." evidence="6" ref="1">
    <original>R</original>
    <variation>K</variation>
    <location>
        <position position="99"/>
    </location>
</feature>
<feature type="sequence conflict" description="In Ref. 1; AAB06178." evidence="6" ref="1">
    <original>A</original>
    <variation>T</variation>
    <location>
        <position position="121"/>
    </location>
</feature>
<feature type="sequence conflict" description="In Ref. 1; AAB06178." evidence="6" ref="1">
    <original>N</original>
    <variation>S</variation>
    <location>
        <position position="129"/>
    </location>
</feature>
<feature type="sequence conflict" description="In Ref. 1; AAB06178." evidence="6" ref="1">
    <original>L</original>
    <variation>S</variation>
    <location>
        <position position="143"/>
    </location>
</feature>
<feature type="sequence conflict" description="In Ref. 1; AAB06178." evidence="6" ref="1">
    <original>P</original>
    <variation>A</variation>
    <location>
        <position position="146"/>
    </location>
</feature>
<feature type="strand" evidence="14">
    <location>
        <begin position="2"/>
        <end position="5"/>
    </location>
</feature>
<feature type="strand" evidence="14">
    <location>
        <begin position="9"/>
        <end position="17"/>
    </location>
</feature>
<feature type="strand" evidence="14">
    <location>
        <begin position="22"/>
        <end position="26"/>
    </location>
</feature>
<feature type="strand" evidence="14">
    <location>
        <begin position="37"/>
        <end position="42"/>
    </location>
</feature>
<feature type="strand" evidence="14">
    <location>
        <begin position="48"/>
        <end position="55"/>
    </location>
</feature>
<feature type="turn" evidence="14">
    <location>
        <begin position="56"/>
        <end position="59"/>
    </location>
</feature>
<feature type="strand" evidence="14">
    <location>
        <begin position="60"/>
        <end position="66"/>
    </location>
</feature>
<feature type="strand" evidence="13">
    <location>
        <begin position="68"/>
        <end position="70"/>
    </location>
</feature>
<feature type="strand" evidence="14">
    <location>
        <begin position="76"/>
        <end position="79"/>
    </location>
</feature>
<feature type="strand" evidence="14">
    <location>
        <begin position="86"/>
        <end position="88"/>
    </location>
</feature>
<feature type="strand" evidence="14">
    <location>
        <begin position="90"/>
        <end position="95"/>
    </location>
</feature>
<feature type="strand" evidence="14">
    <location>
        <begin position="97"/>
        <end position="103"/>
    </location>
</feature>
<feature type="strand" evidence="14">
    <location>
        <begin position="105"/>
        <end position="107"/>
    </location>
</feature>
<feature type="strand" evidence="14">
    <location>
        <begin position="110"/>
        <end position="113"/>
    </location>
</feature>
<feature type="strand" evidence="14">
    <location>
        <begin position="120"/>
        <end position="129"/>
    </location>
</feature>
<feature type="strand" evidence="14">
    <location>
        <begin position="134"/>
        <end position="143"/>
    </location>
</feature>
<comment type="function">
    <text evidence="3 4 5">Binds lactose (PubMed:15062091, PubMed:8999822). May play a role in fruiting body formation (PubMed:8999822). Displays toxicity towards the nematode C.elegans by binding to a specific Gal-beta-1,4-Fuc-alpha-1,6 modification of N-glycan cores on C.elegans intestinal cells (PubMed:20062796).</text>
</comment>
<comment type="subunit">
    <text evidence="3">Homotetramer. Oligomerization is required for carbohydrate binding.</text>
</comment>
<comment type="subcellular location">
    <subcellularLocation>
        <location evidence="2">Secreted</location>
        <location evidence="2">Extracellular space</location>
        <location evidence="2">Extracellular matrix</location>
    </subcellularLocation>
    <subcellularLocation>
        <location evidence="2">Secreted</location>
        <location evidence="2">Cell wall</location>
    </subcellularLocation>
    <subcellularLocation>
        <location evidence="2">Endomembrane system</location>
    </subcellularLocation>
    <text>Detected in extracellular matrix, cell wall and cytoplasmic membrane-bound bodies.</text>
</comment>
<comment type="mass spectrometry"/>
<comment type="online information" name="Functional Glycomics Gateway - Glycan Binding">
    <link uri="http://www.functionalglycomics.org/glycomics/GBPServlet?&amp;operationType=view&amp;cbpId=cbp_oth_Stlect_379"/>
    <text>CGL2</text>
</comment>
<name>CGL2_COPCI</name>
<protein>
    <recommendedName>
        <fullName>Galectin-2</fullName>
    </recommendedName>
    <alternativeName>
        <fullName>Cgl-II</fullName>
    </alternativeName>
    <alternativeName>
        <fullName>Galectin II</fullName>
    </alternativeName>
</protein>
<proteinExistence type="evidence at protein level"/>
<evidence type="ECO:0000255" key="1">
    <source>
        <dbReference type="PROSITE-ProRule" id="PRU00639"/>
    </source>
</evidence>
<evidence type="ECO:0000269" key="2">
    <source>
    </source>
</evidence>
<evidence type="ECO:0000269" key="3">
    <source>
    </source>
</evidence>
<evidence type="ECO:0000269" key="4">
    <source>
    </source>
</evidence>
<evidence type="ECO:0000269" key="5">
    <source>
    </source>
</evidence>
<evidence type="ECO:0000305" key="6"/>
<evidence type="ECO:0007744" key="7">
    <source>
        <dbReference type="PDB" id="1ULC"/>
    </source>
</evidence>
<evidence type="ECO:0007744" key="8">
    <source>
        <dbReference type="PDB" id="1ULD"/>
    </source>
</evidence>
<evidence type="ECO:0007744" key="9">
    <source>
        <dbReference type="PDB" id="1ULE"/>
    </source>
</evidence>
<evidence type="ECO:0007744" key="10">
    <source>
        <dbReference type="PDB" id="1ULF"/>
    </source>
</evidence>
<evidence type="ECO:0007744" key="11">
    <source>
        <dbReference type="PDB" id="1ULG"/>
    </source>
</evidence>
<evidence type="ECO:0007744" key="12">
    <source>
        <dbReference type="PDB" id="2WKK"/>
    </source>
</evidence>
<evidence type="ECO:0007829" key="13">
    <source>
        <dbReference type="PDB" id="1ULG"/>
    </source>
</evidence>
<evidence type="ECO:0007829" key="14">
    <source>
        <dbReference type="PDB" id="2WKK"/>
    </source>
</evidence>
<accession>Q9P4R8</accession>
<accession>Q92214</accession>
<keyword id="KW-0002">3D-structure</keyword>
<keyword id="KW-0134">Cell wall</keyword>
<keyword id="KW-0903">Direct protein sequencing</keyword>
<keyword id="KW-0272">Extracellular matrix</keyword>
<keyword id="KW-0293">Fruiting body</keyword>
<keyword id="KW-0430">Lectin</keyword>
<keyword id="KW-0472">Membrane</keyword>
<keyword id="KW-0964">Secreted</keyword>
<dbReference type="EMBL" id="U64676">
    <property type="protein sequence ID" value="AAB06178.1"/>
    <property type="molecule type" value="mRNA"/>
</dbReference>
<dbReference type="EMBL" id="AF130360">
    <property type="protein sequence ID" value="AAF34732.1"/>
    <property type="molecule type" value="Genomic_DNA"/>
</dbReference>
<dbReference type="PDB" id="1UL9">
    <property type="method" value="X-ray"/>
    <property type="resolution" value="2.22 A"/>
    <property type="chains" value="A/B=1-150"/>
</dbReference>
<dbReference type="PDB" id="1ULC">
    <property type="method" value="X-ray"/>
    <property type="resolution" value="2.60 A"/>
    <property type="chains" value="A/B=1-150"/>
</dbReference>
<dbReference type="PDB" id="1ULD">
    <property type="method" value="X-ray"/>
    <property type="resolution" value="2.10 A"/>
    <property type="chains" value="A/B/C/D=1-150"/>
</dbReference>
<dbReference type="PDB" id="1ULE">
    <property type="method" value="X-ray"/>
    <property type="resolution" value="2.15 A"/>
    <property type="chains" value="A/B=1-150"/>
</dbReference>
<dbReference type="PDB" id="1ULF">
    <property type="method" value="X-ray"/>
    <property type="resolution" value="2.36 A"/>
    <property type="chains" value="A/B=1-150"/>
</dbReference>
<dbReference type="PDB" id="1ULG">
    <property type="method" value="X-ray"/>
    <property type="resolution" value="2.20 A"/>
    <property type="chains" value="A/B/C/D=1-150"/>
</dbReference>
<dbReference type="PDB" id="2WKK">
    <property type="method" value="X-ray"/>
    <property type="resolution" value="1.50 A"/>
    <property type="chains" value="A/B/C/D=1-150"/>
</dbReference>
<dbReference type="PDBsum" id="1UL9"/>
<dbReference type="PDBsum" id="1ULC"/>
<dbReference type="PDBsum" id="1ULD"/>
<dbReference type="PDBsum" id="1ULE"/>
<dbReference type="PDBsum" id="1ULF"/>
<dbReference type="PDBsum" id="1ULG"/>
<dbReference type="PDBsum" id="2WKK"/>
<dbReference type="SMR" id="Q9P4R8"/>
<dbReference type="UniLectin" id="Q9P4R8"/>
<dbReference type="VEuPathDB" id="FungiDB:CC1G_05005"/>
<dbReference type="VEuPathDB" id="FungiDB:CC2G_013120"/>
<dbReference type="OMA" id="HLYNKRF"/>
<dbReference type="EvolutionaryTrace" id="Q9P4R8"/>
<dbReference type="GO" id="GO:0012505">
    <property type="term" value="C:endomembrane system"/>
    <property type="evidence" value="ECO:0007669"/>
    <property type="project" value="UniProtKB-SubCell"/>
</dbReference>
<dbReference type="GO" id="GO:0005576">
    <property type="term" value="C:extracellular region"/>
    <property type="evidence" value="ECO:0007669"/>
    <property type="project" value="UniProtKB-KW"/>
</dbReference>
<dbReference type="GO" id="GO:0016020">
    <property type="term" value="C:membrane"/>
    <property type="evidence" value="ECO:0007669"/>
    <property type="project" value="UniProtKB-KW"/>
</dbReference>
<dbReference type="GO" id="GO:0030246">
    <property type="term" value="F:carbohydrate binding"/>
    <property type="evidence" value="ECO:0007669"/>
    <property type="project" value="UniProtKB-KW"/>
</dbReference>
<dbReference type="CDD" id="cd00070">
    <property type="entry name" value="GLECT"/>
    <property type="match status" value="1"/>
</dbReference>
<dbReference type="Gene3D" id="2.60.120.200">
    <property type="match status" value="1"/>
</dbReference>
<dbReference type="InterPro" id="IPR013320">
    <property type="entry name" value="ConA-like_dom_sf"/>
</dbReference>
<dbReference type="InterPro" id="IPR001079">
    <property type="entry name" value="Galectin_CRD"/>
</dbReference>
<dbReference type="Pfam" id="PF00337">
    <property type="entry name" value="Gal-bind_lectin"/>
    <property type="match status" value="1"/>
</dbReference>
<dbReference type="SMART" id="SM00276">
    <property type="entry name" value="GLECT"/>
    <property type="match status" value="1"/>
</dbReference>
<dbReference type="SUPFAM" id="SSF49899">
    <property type="entry name" value="Concanavalin A-like lectins/glucanases"/>
    <property type="match status" value="1"/>
</dbReference>
<dbReference type="PROSITE" id="PS51304">
    <property type="entry name" value="GALECTIN"/>
    <property type="match status" value="1"/>
</dbReference>
<reference key="1">
    <citation type="journal article" date="1997" name="J. Biol. Chem.">
        <title>Fungal galectins, sequence and specificity of two isolectins from Coprinus cinereus.</title>
        <authorList>
            <person name="Cooper D.N.W."/>
            <person name="Boulianne R.P."/>
            <person name="Charlton S."/>
            <person name="Farrell E.M."/>
            <person name="Sucher A."/>
            <person name="Lu B.C."/>
        </authorList>
    </citation>
    <scope>NUCLEOTIDE SEQUENCE [MRNA]</scope>
    <scope>PROTEIN SEQUENCE OF 1-20</scope>
    <scope>FUNCTION</scope>
    <scope>MASS SPECTROMETRY</scope>
    <source>
        <strain>JR52</strain>
    </source>
</reference>
<reference key="2">
    <citation type="journal article" date="2000" name="Microbiology">
        <title>Fruiting body development in Coprinus cinereus: regulated expression of two galectins secreted by a non-classical pathway.</title>
        <authorList>
            <person name="Boulianne R.P."/>
            <person name="Liu Y."/>
            <person name="Aebi M."/>
            <person name="Lu B.C."/>
            <person name="Kuees U."/>
        </authorList>
    </citation>
    <scope>NUCLEOTIDE SEQUENCE [GENOMIC DNA]</scope>
    <scope>SUBCELLULAR LOCATION</scope>
    <source>
        <strain>AmutBmut</strain>
    </source>
</reference>
<reference key="3">
    <citation type="journal article" date="2004" name="Structure">
        <title>Structure and functional analysis of the fungal galectin CGL2.</title>
        <authorList>
            <person name="Walser P.J."/>
            <person name="Haebel P.W."/>
            <person name="Kuenzler M."/>
            <person name="Sargent D."/>
            <person name="Kuees U."/>
            <person name="Aebi M."/>
            <person name="Ban N."/>
        </authorList>
    </citation>
    <scope>X-RAY CRYSTALLOGRAPHY (2.1 ANGSTROMS) IN COMPLEX WITH LACTOSE AND SUBSTRATE ANALOGS</scope>
    <scope>FUNCTION</scope>
    <scope>SUBUNIT</scope>
    <scope>MUTAGENESIS OF ARG-55; TRP-72; PRO-146; LEU-147 AND PRO-148</scope>
</reference>
<reference key="4">
    <citation type="journal article" date="2010" name="PLoS Pathog.">
        <title>Caenorhabditis elegans N-glycan core beta-galactoside confers sensitivity towards nematotoxic fungal galectin CGL2.</title>
        <authorList>
            <person name="Butschi A."/>
            <person name="Titz A."/>
            <person name="Waelti M.A."/>
            <person name="Olieric V."/>
            <person name="Paschinger K."/>
            <person name="Noebauer K."/>
            <person name="Guo X."/>
            <person name="Seeberger P.H."/>
            <person name="Wilson I.B."/>
            <person name="Aebi M."/>
            <person name="Hengartner M.O."/>
            <person name="Kuenzler M."/>
        </authorList>
    </citation>
    <scope>X-RAY CRYSTALLOGRAPHY (1.5 ANGSTROMS) IN COMPLEX WITH SUBSTRATE ANALOG</scope>
    <scope>FUNCTION</scope>
    <scope>MUTAGENESIS OF TRP-72</scope>
</reference>
<organism>
    <name type="scientific">Coprinopsis cinerea</name>
    <name type="common">Inky cap fungus</name>
    <name type="synonym">Hormographiella aspergillata</name>
    <dbReference type="NCBI Taxonomy" id="5346"/>
    <lineage>
        <taxon>Eukaryota</taxon>
        <taxon>Fungi</taxon>
        <taxon>Dikarya</taxon>
        <taxon>Basidiomycota</taxon>
        <taxon>Agaricomycotina</taxon>
        <taxon>Agaricomycetes</taxon>
        <taxon>Agaricomycetidae</taxon>
        <taxon>Agaricales</taxon>
        <taxon>Agaricineae</taxon>
        <taxon>Psathyrellaceae</taxon>
        <taxon>Coprinopsis</taxon>
    </lineage>
</organism>